<proteinExistence type="inferred from homology"/>
<accession>Q09679</accession>
<protein>
    <recommendedName>
        <fullName>Probable alpha-1,2-galactosyltransferase gmh1</fullName>
        <ecNumber>2.4.1.-</ecNumber>
    </recommendedName>
</protein>
<keyword id="KW-0325">Glycoprotein</keyword>
<keyword id="KW-0328">Glycosyltransferase</keyword>
<keyword id="KW-0333">Golgi apparatus</keyword>
<keyword id="KW-0472">Membrane</keyword>
<keyword id="KW-1185">Reference proteome</keyword>
<keyword id="KW-0735">Signal-anchor</keyword>
<keyword id="KW-0808">Transferase</keyword>
<keyword id="KW-0812">Transmembrane</keyword>
<keyword id="KW-1133">Transmembrane helix</keyword>
<evidence type="ECO:0000255" key="1"/>
<evidence type="ECO:0000305" key="2"/>
<reference key="1">
    <citation type="journal article" date="2002" name="Nature">
        <title>The genome sequence of Schizosaccharomyces pombe.</title>
        <authorList>
            <person name="Wood V."/>
            <person name="Gwilliam R."/>
            <person name="Rajandream M.A."/>
            <person name="Lyne M.H."/>
            <person name="Lyne R."/>
            <person name="Stewart A."/>
            <person name="Sgouros J.G."/>
            <person name="Peat N."/>
            <person name="Hayles J."/>
            <person name="Baker S.G."/>
            <person name="Basham D."/>
            <person name="Bowman S."/>
            <person name="Brooks K."/>
            <person name="Brown D."/>
            <person name="Brown S."/>
            <person name="Chillingworth T."/>
            <person name="Churcher C.M."/>
            <person name="Collins M."/>
            <person name="Connor R."/>
            <person name="Cronin A."/>
            <person name="Davis P."/>
            <person name="Feltwell T."/>
            <person name="Fraser A."/>
            <person name="Gentles S."/>
            <person name="Goble A."/>
            <person name="Hamlin N."/>
            <person name="Harris D.E."/>
            <person name="Hidalgo J."/>
            <person name="Hodgson G."/>
            <person name="Holroyd S."/>
            <person name="Hornsby T."/>
            <person name="Howarth S."/>
            <person name="Huckle E.J."/>
            <person name="Hunt S."/>
            <person name="Jagels K."/>
            <person name="James K.D."/>
            <person name="Jones L."/>
            <person name="Jones M."/>
            <person name="Leather S."/>
            <person name="McDonald S."/>
            <person name="McLean J."/>
            <person name="Mooney P."/>
            <person name="Moule S."/>
            <person name="Mungall K.L."/>
            <person name="Murphy L.D."/>
            <person name="Niblett D."/>
            <person name="Odell C."/>
            <person name="Oliver K."/>
            <person name="O'Neil S."/>
            <person name="Pearson D."/>
            <person name="Quail M.A."/>
            <person name="Rabbinowitsch E."/>
            <person name="Rutherford K.M."/>
            <person name="Rutter S."/>
            <person name="Saunders D."/>
            <person name="Seeger K."/>
            <person name="Sharp S."/>
            <person name="Skelton J."/>
            <person name="Simmonds M.N."/>
            <person name="Squares R."/>
            <person name="Squares S."/>
            <person name="Stevens K."/>
            <person name="Taylor K."/>
            <person name="Taylor R.G."/>
            <person name="Tivey A."/>
            <person name="Walsh S.V."/>
            <person name="Warren T."/>
            <person name="Whitehead S."/>
            <person name="Woodward J.R."/>
            <person name="Volckaert G."/>
            <person name="Aert R."/>
            <person name="Robben J."/>
            <person name="Grymonprez B."/>
            <person name="Weltjens I."/>
            <person name="Vanstreels E."/>
            <person name="Rieger M."/>
            <person name="Schaefer M."/>
            <person name="Mueller-Auer S."/>
            <person name="Gabel C."/>
            <person name="Fuchs M."/>
            <person name="Duesterhoeft A."/>
            <person name="Fritzc C."/>
            <person name="Holzer E."/>
            <person name="Moestl D."/>
            <person name="Hilbert H."/>
            <person name="Borzym K."/>
            <person name="Langer I."/>
            <person name="Beck A."/>
            <person name="Lehrach H."/>
            <person name="Reinhardt R."/>
            <person name="Pohl T.M."/>
            <person name="Eger P."/>
            <person name="Zimmermann W."/>
            <person name="Wedler H."/>
            <person name="Wambutt R."/>
            <person name="Purnelle B."/>
            <person name="Goffeau A."/>
            <person name="Cadieu E."/>
            <person name="Dreano S."/>
            <person name="Gloux S."/>
            <person name="Lelaure V."/>
            <person name="Mottier S."/>
            <person name="Galibert F."/>
            <person name="Aves S.J."/>
            <person name="Xiang Z."/>
            <person name="Hunt C."/>
            <person name="Moore K."/>
            <person name="Hurst S.M."/>
            <person name="Lucas M."/>
            <person name="Rochet M."/>
            <person name="Gaillardin C."/>
            <person name="Tallada V.A."/>
            <person name="Garzon A."/>
            <person name="Thode G."/>
            <person name="Daga R.R."/>
            <person name="Cruzado L."/>
            <person name="Jimenez J."/>
            <person name="Sanchez M."/>
            <person name="del Rey F."/>
            <person name="Benito J."/>
            <person name="Dominguez A."/>
            <person name="Revuelta J.L."/>
            <person name="Moreno S."/>
            <person name="Armstrong J."/>
            <person name="Forsburg S.L."/>
            <person name="Cerutti L."/>
            <person name="Lowe T."/>
            <person name="McCombie W.R."/>
            <person name="Paulsen I."/>
            <person name="Potashkin J."/>
            <person name="Shpakovski G.V."/>
            <person name="Ussery D."/>
            <person name="Barrell B.G."/>
            <person name="Nurse P."/>
        </authorList>
    </citation>
    <scope>NUCLEOTIDE SEQUENCE [LARGE SCALE GENOMIC DNA]</scope>
    <source>
        <strain>972 / ATCC 24843</strain>
    </source>
</reference>
<sequence>MLSFFTKNTLTKRKLIMLALAIVFTFFAFGLYFIPHDEISVFDFKLPALQYETTVTSLDNFLIGGSTTLYTATVNHEDLNEPKSHEIVMLLASDGNVGSFESNLLDDCFKNRIEYAKLQNYNFEFVNVSSLVVPPVWGKMPAILQTMRKYPSAKWIWWLDQDALIMNKNLSLQELFLSPAMLQKSLLREQPIINSFGEDNFRITPAAYSKEMIEQIQFLISQDHNGLNAGSFLVRNSRSIALLMDLLTDPSLADAGVVRHEQDLIGYFIQKHSQVASMVGILPQRFINAFHEGPPTMQWQEGDLALHFAGCWVENKCAELWTKYKDKII</sequence>
<dbReference type="EC" id="2.4.1.-"/>
<dbReference type="EMBL" id="CU329670">
    <property type="protein sequence ID" value="CAA89961.1"/>
    <property type="molecule type" value="Genomic_DNA"/>
</dbReference>
<dbReference type="PIR" id="T38975">
    <property type="entry name" value="S55489"/>
</dbReference>
<dbReference type="RefSeq" id="NP_592824.1">
    <property type="nucleotide sequence ID" value="NM_001018224.2"/>
</dbReference>
<dbReference type="SMR" id="Q09679"/>
<dbReference type="BioGRID" id="278501">
    <property type="interactions" value="11"/>
</dbReference>
<dbReference type="FunCoup" id="Q09679">
    <property type="interactions" value="50"/>
</dbReference>
<dbReference type="STRING" id="284812.Q09679"/>
<dbReference type="CAZy" id="GT34">
    <property type="family name" value="Glycosyltransferase Family 34"/>
</dbReference>
<dbReference type="GlyCosmos" id="Q09679">
    <property type="glycosylation" value="2 sites, No reported glycans"/>
</dbReference>
<dbReference type="PaxDb" id="4896-SPAC5H10.11.1"/>
<dbReference type="EnsemblFungi" id="SPAC5H10.11.1">
    <property type="protein sequence ID" value="SPAC5H10.11.1:pep"/>
    <property type="gene ID" value="SPAC5H10.11"/>
</dbReference>
<dbReference type="GeneID" id="2542018"/>
<dbReference type="KEGG" id="spo:2542018"/>
<dbReference type="PomBase" id="SPAC5H10.11">
    <property type="gene designation" value="gmh1"/>
</dbReference>
<dbReference type="VEuPathDB" id="FungiDB:SPAC5H10.11"/>
<dbReference type="eggNOG" id="KOG4748">
    <property type="taxonomic scope" value="Eukaryota"/>
</dbReference>
<dbReference type="HOGENOM" id="CLU_021434_2_0_1"/>
<dbReference type="InParanoid" id="Q09679"/>
<dbReference type="OMA" id="CWVENKC"/>
<dbReference type="PhylomeDB" id="Q09679"/>
<dbReference type="PRO" id="PR:Q09679"/>
<dbReference type="Proteomes" id="UP000002485">
    <property type="component" value="Chromosome I"/>
</dbReference>
<dbReference type="GO" id="GO:0005783">
    <property type="term" value="C:endoplasmic reticulum"/>
    <property type="evidence" value="ECO:0007005"/>
    <property type="project" value="PomBase"/>
</dbReference>
<dbReference type="GO" id="GO:0005794">
    <property type="term" value="C:Golgi apparatus"/>
    <property type="evidence" value="ECO:0007005"/>
    <property type="project" value="PomBase"/>
</dbReference>
<dbReference type="GO" id="GO:0000139">
    <property type="term" value="C:Golgi membrane"/>
    <property type="evidence" value="ECO:0000318"/>
    <property type="project" value="GO_Central"/>
</dbReference>
<dbReference type="GO" id="GO:0031278">
    <property type="term" value="F:alpha-1,2-galactosyltransferase activity"/>
    <property type="evidence" value="ECO:0000269"/>
    <property type="project" value="PomBase"/>
</dbReference>
<dbReference type="GO" id="GO:0006487">
    <property type="term" value="P:protein N-linked glycosylation"/>
    <property type="evidence" value="ECO:0000318"/>
    <property type="project" value="GO_Central"/>
</dbReference>
<dbReference type="GO" id="GO:0018279">
    <property type="term" value="P:protein N-linked glycosylation via asparagine"/>
    <property type="evidence" value="ECO:0000269"/>
    <property type="project" value="PomBase"/>
</dbReference>
<dbReference type="FunFam" id="3.90.550.10:FF:000149">
    <property type="entry name" value="Alpha-1,6-mannosyltransferase subunit"/>
    <property type="match status" value="1"/>
</dbReference>
<dbReference type="Gene3D" id="3.90.550.10">
    <property type="entry name" value="Spore Coat Polysaccharide Biosynthesis Protein SpsA, Chain A"/>
    <property type="match status" value="1"/>
</dbReference>
<dbReference type="InterPro" id="IPR008630">
    <property type="entry name" value="Glyco_trans_34"/>
</dbReference>
<dbReference type="InterPro" id="IPR029044">
    <property type="entry name" value="Nucleotide-diphossugar_trans"/>
</dbReference>
<dbReference type="PANTHER" id="PTHR31306:SF2">
    <property type="entry name" value="ALPHA-1,2-GALACTOSYLTRANSFERASE GMH3-RELATED"/>
    <property type="match status" value="1"/>
</dbReference>
<dbReference type="PANTHER" id="PTHR31306">
    <property type="entry name" value="ALPHA-1,6-MANNOSYLTRANSFERASE MNN11-RELATED"/>
    <property type="match status" value="1"/>
</dbReference>
<dbReference type="Pfam" id="PF05637">
    <property type="entry name" value="Glyco_transf_34"/>
    <property type="match status" value="1"/>
</dbReference>
<name>GMH1_SCHPO</name>
<gene>
    <name type="primary">gmh1</name>
    <name type="ORF">SPAC5H10.11</name>
</gene>
<organism>
    <name type="scientific">Schizosaccharomyces pombe (strain 972 / ATCC 24843)</name>
    <name type="common">Fission yeast</name>
    <dbReference type="NCBI Taxonomy" id="284812"/>
    <lineage>
        <taxon>Eukaryota</taxon>
        <taxon>Fungi</taxon>
        <taxon>Dikarya</taxon>
        <taxon>Ascomycota</taxon>
        <taxon>Taphrinomycotina</taxon>
        <taxon>Schizosaccharomycetes</taxon>
        <taxon>Schizosaccharomycetales</taxon>
        <taxon>Schizosaccharomycetaceae</taxon>
        <taxon>Schizosaccharomyces</taxon>
    </lineage>
</organism>
<feature type="chain" id="PRO_0000215166" description="Probable alpha-1,2-galactosyltransferase gmh1">
    <location>
        <begin position="1"/>
        <end position="329"/>
    </location>
</feature>
<feature type="topological domain" description="Cytoplasmic" evidence="1">
    <location>
        <begin position="1"/>
        <end position="14"/>
    </location>
</feature>
<feature type="transmembrane region" description="Helical; Signal-anchor for type II membrane protein" evidence="1">
    <location>
        <begin position="15"/>
        <end position="35"/>
    </location>
</feature>
<feature type="topological domain" description="Lumenal" evidence="1">
    <location>
        <begin position="36"/>
        <end position="329"/>
    </location>
</feature>
<feature type="glycosylation site" description="N-linked (GlcNAc...) asparagine" evidence="1">
    <location>
        <position position="127"/>
    </location>
</feature>
<feature type="glycosylation site" description="N-linked (GlcNAc...) asparagine" evidence="1">
    <location>
        <position position="169"/>
    </location>
</feature>
<comment type="subcellular location">
    <subcellularLocation>
        <location evidence="2">Golgi apparatus membrane</location>
        <topology evidence="2">Single-pass type II membrane protein</topology>
    </subcellularLocation>
</comment>
<comment type="similarity">
    <text evidence="2">Belongs to the glycosyltransferase 34 family.</text>
</comment>